<feature type="chain" id="PRO_0000309200" description="Uncharacterized protein R392">
    <location>
        <begin position="1"/>
        <end position="400"/>
    </location>
</feature>
<feature type="domain" description="TR mART core" evidence="1">
    <location>
        <begin position="161"/>
        <end position="380"/>
    </location>
</feature>
<accession>Q5UQ42</accession>
<organismHost>
    <name type="scientific">Acanthamoeba polyphaga</name>
    <name type="common">Amoeba</name>
    <dbReference type="NCBI Taxonomy" id="5757"/>
</organismHost>
<proteinExistence type="predicted"/>
<gene>
    <name type="ordered locus">MIMI_R392</name>
</gene>
<name>YR392_MIMIV</name>
<evidence type="ECO:0000255" key="1">
    <source>
        <dbReference type="PROSITE-ProRule" id="PRU01340"/>
    </source>
</evidence>
<sequence length="400" mass="47235">MTIRQSSVQYVPYFNNRIKYARIPYIIKEFLENIICGIDIEKNVENINYLLDINMYVQNPEFYNNGYDDLNTFLEISENTYFGQSFIEDMELSTKIDELYKKNNTNHIVNKIMGLPLETNIIEKIIKKYYDTYQHKFSIDNNHGLTNLYNINPFREITTNNDLLNIIDIVKTTDKKYQTPIREYTGGKHIWINCYCQLINLGLEEHNESTQFIKNPDNIVEIAKNMNHVFNELYFNYQYINIIDNIFKNEFEVISSQTFLYYCDPTGQTNIVDNLNIGIGSVIFIPNHLSTSYGSFKTFKEFISPTKVIYKIKITNYPNKGKNWIFIDTYSRVQEEKEILIRANSYYVIEDIDYVLIEFNHDDFDNVSEPYVVKVIVMRLFDDVTSAVIYSTKLNTVVND</sequence>
<reference key="1">
    <citation type="journal article" date="2004" name="Science">
        <title>The 1.2-megabase genome sequence of Mimivirus.</title>
        <authorList>
            <person name="Raoult D."/>
            <person name="Audic S."/>
            <person name="Robert C."/>
            <person name="Abergel C."/>
            <person name="Renesto P."/>
            <person name="Ogata H."/>
            <person name="La Scola B."/>
            <person name="Susan M."/>
            <person name="Claverie J.-M."/>
        </authorList>
    </citation>
    <scope>NUCLEOTIDE SEQUENCE [LARGE SCALE GENOMIC DNA]</scope>
    <source>
        <strain>Rowbotham-Bradford</strain>
    </source>
</reference>
<keyword id="KW-1185">Reference proteome</keyword>
<dbReference type="EMBL" id="AY653733">
    <property type="protein sequence ID" value="AAV50661.1"/>
    <property type="molecule type" value="Genomic_DNA"/>
</dbReference>
<dbReference type="Proteomes" id="UP000001134">
    <property type="component" value="Genome"/>
</dbReference>
<dbReference type="Gene3D" id="3.90.176.10">
    <property type="entry name" value="Toxin ADP-ribosyltransferase, Chain A, domain 1"/>
    <property type="match status" value="1"/>
</dbReference>
<dbReference type="SUPFAM" id="SSF56399">
    <property type="entry name" value="ADP-ribosylation"/>
    <property type="match status" value="1"/>
</dbReference>
<dbReference type="PROSITE" id="PS51996">
    <property type="entry name" value="TR_MART"/>
    <property type="match status" value="1"/>
</dbReference>
<organism>
    <name type="scientific">Acanthamoeba polyphaga mimivirus</name>
    <name type="common">APMV</name>
    <dbReference type="NCBI Taxonomy" id="212035"/>
    <lineage>
        <taxon>Viruses</taxon>
        <taxon>Varidnaviria</taxon>
        <taxon>Bamfordvirae</taxon>
        <taxon>Nucleocytoviricota</taxon>
        <taxon>Megaviricetes</taxon>
        <taxon>Imitervirales</taxon>
        <taxon>Mimiviridae</taxon>
        <taxon>Megamimivirinae</taxon>
        <taxon>Mimivirus</taxon>
        <taxon>Mimivirus bradfordmassiliense</taxon>
    </lineage>
</organism>
<protein>
    <recommendedName>
        <fullName>Uncharacterized protein R392</fullName>
    </recommendedName>
</protein>